<accession>Q95P04</accession>
<evidence type="ECO:0000250" key="1">
    <source>
        <dbReference type="UniProtKB" id="P83690"/>
    </source>
</evidence>
<evidence type="ECO:0000269" key="2">
    <source>
    </source>
</evidence>
<evidence type="ECO:0000305" key="3"/>
<evidence type="ECO:0000312" key="4">
    <source>
        <dbReference type="EMBL" id="AAL27542.1"/>
    </source>
</evidence>
<sequence>MSVIAKQMTYKVYMSGTVNGHYFEVQGDGKGKPYEGEQTVKLTVTKGGPLPFAWDILSPQSQYGSIPFTKYPEDIPDYVKQSFPEGYTWERIMNFEDGAVCTVSNDSSIQGNCFIYNVKFSGLNFPPNGPVMQKKTQGWEPNTERLFARDGMLIGNNFMALKLEGGGHYLCEFKSTYKAKKPVKMPGYHYVDRKLDVTNHNIDYTSVEQCEISIARKPVVA</sequence>
<name>NFCP_GONTE</name>
<organism>
    <name type="scientific">Goniopora tenuidens</name>
    <name type="common">Anemone coral</name>
    <name type="synonym">Rhodaraea tenuidens</name>
    <dbReference type="NCBI Taxonomy" id="75301"/>
    <lineage>
        <taxon>Eukaryota</taxon>
        <taxon>Metazoa</taxon>
        <taxon>Cnidaria</taxon>
        <taxon>Anthozoa</taxon>
        <taxon>Hexacorallia</taxon>
        <taxon>Scleractinia</taxon>
        <taxon>Fungiina</taxon>
        <taxon>Poritidae</taxon>
        <taxon>Goniopora</taxon>
    </lineage>
</organism>
<dbReference type="EMBL" id="AF383156">
    <property type="protein sequence ID" value="AAL27542.1"/>
    <property type="molecule type" value="mRNA"/>
</dbReference>
<dbReference type="SMR" id="Q95P04"/>
<dbReference type="GO" id="GO:0008218">
    <property type="term" value="P:bioluminescence"/>
    <property type="evidence" value="ECO:0007669"/>
    <property type="project" value="UniProtKB-KW"/>
</dbReference>
<dbReference type="Gene3D" id="3.30.1300.40">
    <property type="match status" value="1"/>
</dbReference>
<dbReference type="Gene3D" id="2.40.155.10">
    <property type="entry name" value="Green fluorescent protein"/>
    <property type="match status" value="1"/>
</dbReference>
<dbReference type="InterPro" id="IPR009017">
    <property type="entry name" value="GFP"/>
</dbReference>
<dbReference type="InterPro" id="IPR011584">
    <property type="entry name" value="GFP-related"/>
</dbReference>
<dbReference type="Pfam" id="PF01353">
    <property type="entry name" value="GFP"/>
    <property type="match status" value="1"/>
</dbReference>
<dbReference type="SUPFAM" id="SSF54511">
    <property type="entry name" value="GFP-like"/>
    <property type="match status" value="1"/>
</dbReference>
<comment type="function">
    <text>Non-fluorescent pigment protein that is lilac in color.</text>
</comment>
<comment type="biophysicochemical properties">
    <absorption>
        <max>580 nm</max>
    </absorption>
</comment>
<comment type="subunit">
    <text evidence="2">Homotetramer.</text>
</comment>
<comment type="PTM">
    <text>Contains a chromophore consisting of modified amino acid residues. The chromophore is formed by autocatalytic backbone condensation between Xaa-N and Gly-(N+2), oxidation of Tyr-(N+1) to didehydrotyrosine, and formation of a double bond to the alpha-amino nitrogen of residue Xaa-N. Maturation of the chromophore requires nothing other than molecular oxygen. The precise stereochemistry of the tyrosine has not been determined.</text>
</comment>
<comment type="biotechnology">
    <text evidence="3">Fluorescent proteins have become a useful and ubiquitous tool for making chimeric proteins, where they function as a fluorescent protein tag. Typically they tolerate N- and C-terminal fusion to a broad variety of proteins. They have been expressed in most known cell types and are used as a noninvasive fluorescent marker in living cells and organisms. They enable a wide range of applications where they have functioned as a cell lineage tracer, reporter of gene expression, or as a measure of protein-protein interactions.</text>
</comment>
<comment type="miscellaneous">
    <text>Fluorescence excitation of the Ser-142 mutant is at 589 nm and emission at 615 nm.</text>
</comment>
<comment type="similarity">
    <text evidence="3">Belongs to the GFP family.</text>
</comment>
<keyword id="KW-0157">Chromophore</keyword>
<keyword id="KW-0455">Luminescence</keyword>
<keyword id="KW-0599">Photoprotein</keyword>
<reference evidence="3 4" key="1">
    <citation type="journal article" date="2001" name="FEBS Lett.">
        <title>GFP-like chromoproteins as a source of far-red fluorescent proteins.</title>
        <authorList>
            <person name="Gurskaya N.G."/>
            <person name="Fradkov A.F."/>
            <person name="Terskikh A."/>
            <person name="Matz M.V."/>
            <person name="Labas Y.A."/>
            <person name="Martynov V.I."/>
            <person name="Yanushevich Y.G."/>
            <person name="Lukyanov K.A."/>
            <person name="Lukyanov S.A."/>
        </authorList>
    </citation>
    <scope>NUCLEOTIDE SEQUENCE [MRNA]</scope>
    <scope>SUBUNIT</scope>
    <scope>MUTAGENESIS OF ASN-142</scope>
</reference>
<proteinExistence type="evidence at protein level"/>
<protein>
    <recommendedName>
        <fullName>GFP-like non-fluorescent chromoprotein</fullName>
        <shortName>gtCP</shortName>
    </recommendedName>
</protein>
<feature type="chain" id="PRO_0000192585" description="GFP-like non-fluorescent chromoprotein">
    <location>
        <begin position="1"/>
        <end position="221"/>
    </location>
</feature>
<feature type="modified residue" description="2,3-didehydrotyrosine" evidence="1">
    <location>
        <position position="63"/>
    </location>
</feature>
<feature type="cross-link" description="2-iminomethyl-5-imidazolinone (Gln-Gly)" evidence="1">
    <location>
        <begin position="62"/>
        <end position="64"/>
    </location>
</feature>
<feature type="mutagenesis site" description="Produces a fluorescent form." evidence="2">
    <original>N</original>
    <variation>S</variation>
    <location>
        <position position="142"/>
    </location>
</feature>